<dbReference type="EC" id="6.1.1.10" evidence="1"/>
<dbReference type="EMBL" id="AE006914">
    <property type="protein sequence ID" value="AAL03584.1"/>
    <property type="molecule type" value="Genomic_DNA"/>
</dbReference>
<dbReference type="PIR" id="F97830">
    <property type="entry name" value="F97830"/>
</dbReference>
<dbReference type="RefSeq" id="WP_010977624.1">
    <property type="nucleotide sequence ID" value="NC_003103.1"/>
</dbReference>
<dbReference type="SMR" id="Q92GS6"/>
<dbReference type="GeneID" id="928195"/>
<dbReference type="KEGG" id="rco:RC1046"/>
<dbReference type="PATRIC" id="fig|272944.4.peg.1197"/>
<dbReference type="HOGENOM" id="CLU_009710_9_4_5"/>
<dbReference type="Proteomes" id="UP000000816">
    <property type="component" value="Chromosome"/>
</dbReference>
<dbReference type="GO" id="GO:0005737">
    <property type="term" value="C:cytoplasm"/>
    <property type="evidence" value="ECO:0007669"/>
    <property type="project" value="UniProtKB-SubCell"/>
</dbReference>
<dbReference type="GO" id="GO:0005524">
    <property type="term" value="F:ATP binding"/>
    <property type="evidence" value="ECO:0007669"/>
    <property type="project" value="UniProtKB-UniRule"/>
</dbReference>
<dbReference type="GO" id="GO:0004825">
    <property type="term" value="F:methionine-tRNA ligase activity"/>
    <property type="evidence" value="ECO:0007669"/>
    <property type="project" value="UniProtKB-UniRule"/>
</dbReference>
<dbReference type="GO" id="GO:0006431">
    <property type="term" value="P:methionyl-tRNA aminoacylation"/>
    <property type="evidence" value="ECO:0007669"/>
    <property type="project" value="UniProtKB-UniRule"/>
</dbReference>
<dbReference type="CDD" id="cd07957">
    <property type="entry name" value="Anticodon_Ia_Met"/>
    <property type="match status" value="1"/>
</dbReference>
<dbReference type="CDD" id="cd00814">
    <property type="entry name" value="MetRS_core"/>
    <property type="match status" value="1"/>
</dbReference>
<dbReference type="FunFam" id="2.170.220.10:FF:000001">
    <property type="entry name" value="methionine--tRNA ligase, mitochondrial"/>
    <property type="match status" value="1"/>
</dbReference>
<dbReference type="Gene3D" id="2.170.220.10">
    <property type="match status" value="1"/>
</dbReference>
<dbReference type="Gene3D" id="3.40.50.620">
    <property type="entry name" value="HUPs"/>
    <property type="match status" value="1"/>
</dbReference>
<dbReference type="Gene3D" id="1.10.730.10">
    <property type="entry name" value="Isoleucyl-tRNA Synthetase, Domain 1"/>
    <property type="match status" value="1"/>
</dbReference>
<dbReference type="HAMAP" id="MF_01228">
    <property type="entry name" value="Met_tRNA_synth_type2"/>
    <property type="match status" value="1"/>
</dbReference>
<dbReference type="InterPro" id="IPR041872">
    <property type="entry name" value="Anticodon_Met"/>
</dbReference>
<dbReference type="InterPro" id="IPR014758">
    <property type="entry name" value="Met-tRNA_synth"/>
</dbReference>
<dbReference type="InterPro" id="IPR023457">
    <property type="entry name" value="Met-tRNA_synth_2"/>
</dbReference>
<dbReference type="InterPro" id="IPR015413">
    <property type="entry name" value="Methionyl/Leucyl_tRNA_Synth"/>
</dbReference>
<dbReference type="InterPro" id="IPR033911">
    <property type="entry name" value="MetRS_core"/>
</dbReference>
<dbReference type="InterPro" id="IPR014729">
    <property type="entry name" value="Rossmann-like_a/b/a_fold"/>
</dbReference>
<dbReference type="InterPro" id="IPR009080">
    <property type="entry name" value="tRNAsynth_Ia_anticodon-bd"/>
</dbReference>
<dbReference type="NCBIfam" id="TIGR00398">
    <property type="entry name" value="metG"/>
    <property type="match status" value="1"/>
</dbReference>
<dbReference type="NCBIfam" id="NF008900">
    <property type="entry name" value="PRK12267.1"/>
    <property type="match status" value="1"/>
</dbReference>
<dbReference type="PANTHER" id="PTHR43326:SF1">
    <property type="entry name" value="METHIONINE--TRNA LIGASE, MITOCHONDRIAL"/>
    <property type="match status" value="1"/>
</dbReference>
<dbReference type="PANTHER" id="PTHR43326">
    <property type="entry name" value="METHIONYL-TRNA SYNTHETASE"/>
    <property type="match status" value="1"/>
</dbReference>
<dbReference type="Pfam" id="PF19303">
    <property type="entry name" value="Anticodon_3"/>
    <property type="match status" value="1"/>
</dbReference>
<dbReference type="Pfam" id="PF09334">
    <property type="entry name" value="tRNA-synt_1g"/>
    <property type="match status" value="2"/>
</dbReference>
<dbReference type="PRINTS" id="PR01041">
    <property type="entry name" value="TRNASYNTHMET"/>
</dbReference>
<dbReference type="SUPFAM" id="SSF47323">
    <property type="entry name" value="Anticodon-binding domain of a subclass of class I aminoacyl-tRNA synthetases"/>
    <property type="match status" value="1"/>
</dbReference>
<dbReference type="SUPFAM" id="SSF52374">
    <property type="entry name" value="Nucleotidylyl transferase"/>
    <property type="match status" value="1"/>
</dbReference>
<name>SYM_RICCN</name>
<feature type="chain" id="PRO_0000139237" description="Methionine--tRNA ligase">
    <location>
        <begin position="1"/>
        <end position="508"/>
    </location>
</feature>
<feature type="short sequence motif" description="'HIGH' region">
    <location>
        <begin position="12"/>
        <end position="22"/>
    </location>
</feature>
<feature type="short sequence motif" description="'KMSKS' region">
    <location>
        <begin position="295"/>
        <end position="299"/>
    </location>
</feature>
<feature type="binding site" evidence="1">
    <location>
        <position position="298"/>
    </location>
    <ligand>
        <name>ATP</name>
        <dbReference type="ChEBI" id="CHEBI:30616"/>
    </ligand>
</feature>
<organism>
    <name type="scientific">Rickettsia conorii (strain ATCC VR-613 / Malish 7)</name>
    <dbReference type="NCBI Taxonomy" id="272944"/>
    <lineage>
        <taxon>Bacteria</taxon>
        <taxon>Pseudomonadati</taxon>
        <taxon>Pseudomonadota</taxon>
        <taxon>Alphaproteobacteria</taxon>
        <taxon>Rickettsiales</taxon>
        <taxon>Rickettsiaceae</taxon>
        <taxon>Rickettsieae</taxon>
        <taxon>Rickettsia</taxon>
        <taxon>spotted fever group</taxon>
    </lineage>
</organism>
<evidence type="ECO:0000255" key="1">
    <source>
        <dbReference type="HAMAP-Rule" id="MF_01228"/>
    </source>
</evidence>
<accession>Q92GS6</accession>
<proteinExistence type="inferred from homology"/>
<protein>
    <recommendedName>
        <fullName evidence="1">Methionine--tRNA ligase</fullName>
        <ecNumber evidence="1">6.1.1.10</ecNumber>
    </recommendedName>
    <alternativeName>
        <fullName evidence="1">Methionyl-tRNA synthetase</fullName>
        <shortName evidence="1">MetRS</shortName>
    </alternativeName>
</protein>
<sequence>MNNTYYITTPIYYVNDIPHIGHAYTSVASDVIARFMRLRGFDVMFLTGTDEHGQKVEKAAINKNIDPQKFTDQTSESFRHLMTAMHISNDDFIRTTEHRHKKAVAVFWQKLLDNGTIYEGFYEGWYAVRDEAFFDESELTRDGLAPTGAPVEWVKEPSYFFNLSKWQDKLLEFYEANPDFIRPISRRNEVISFVKSGLKDLSVSRTTFNWGIKVPNNEKHVIYVWLDALANYISALGYLDEQSNYNKFWPADLHVVGKDILRFHAVYWPAFLMAAEVPLPKTIMAHGWWTNEGQKISKSLGNTIDPIKLIDEFGVDQVRYFLMREVTFGADGNFARSNLITRINSELSNKIGNLLQRTTSFVYKNNDAKVPLLTQGVIDKIYELPILKTASKFVEQNILLMDKTEINKILENIINLAEEANIYIDSEAPWNLKKTDPDKMLEVLYALLEVLRYIAIMLLPFIPSSANKMLDQLGVNKEERLFKHLIRDYTLTAGSNILEPTIIFPKFE</sequence>
<keyword id="KW-0030">Aminoacyl-tRNA synthetase</keyword>
<keyword id="KW-0067">ATP-binding</keyword>
<keyword id="KW-0963">Cytoplasm</keyword>
<keyword id="KW-0436">Ligase</keyword>
<keyword id="KW-0547">Nucleotide-binding</keyword>
<keyword id="KW-0648">Protein biosynthesis</keyword>
<gene>
    <name evidence="1" type="primary">metG</name>
    <name type="synonym">metS</name>
    <name type="ordered locus">RC1046</name>
</gene>
<reference key="1">
    <citation type="journal article" date="2001" name="Science">
        <title>Mechanisms of evolution in Rickettsia conorii and R. prowazekii.</title>
        <authorList>
            <person name="Ogata H."/>
            <person name="Audic S."/>
            <person name="Renesto-Audiffren P."/>
            <person name="Fournier P.-E."/>
            <person name="Barbe V."/>
            <person name="Samson D."/>
            <person name="Roux V."/>
            <person name="Cossart P."/>
            <person name="Weissenbach J."/>
            <person name="Claverie J.-M."/>
            <person name="Raoult D."/>
        </authorList>
    </citation>
    <scope>NUCLEOTIDE SEQUENCE [LARGE SCALE GENOMIC DNA]</scope>
    <source>
        <strain>ATCC VR-613 / Malish 7</strain>
    </source>
</reference>
<comment type="function">
    <text evidence="1">Is required not only for elongation of protein synthesis but also for the initiation of all mRNA translation through initiator tRNA(fMet) aminoacylation.</text>
</comment>
<comment type="catalytic activity">
    <reaction evidence="1">
        <text>tRNA(Met) + L-methionine + ATP = L-methionyl-tRNA(Met) + AMP + diphosphate</text>
        <dbReference type="Rhea" id="RHEA:13481"/>
        <dbReference type="Rhea" id="RHEA-COMP:9667"/>
        <dbReference type="Rhea" id="RHEA-COMP:9698"/>
        <dbReference type="ChEBI" id="CHEBI:30616"/>
        <dbReference type="ChEBI" id="CHEBI:33019"/>
        <dbReference type="ChEBI" id="CHEBI:57844"/>
        <dbReference type="ChEBI" id="CHEBI:78442"/>
        <dbReference type="ChEBI" id="CHEBI:78530"/>
        <dbReference type="ChEBI" id="CHEBI:456215"/>
        <dbReference type="EC" id="6.1.1.10"/>
    </reaction>
</comment>
<comment type="subunit">
    <text evidence="1">Monomer.</text>
</comment>
<comment type="subcellular location">
    <subcellularLocation>
        <location evidence="1">Cytoplasm</location>
    </subcellularLocation>
</comment>
<comment type="similarity">
    <text evidence="1">Belongs to the class-I aminoacyl-tRNA synthetase family. MetG type 2B subfamily.</text>
</comment>